<feature type="chain" id="PRO_0000249130" description="Proline--tRNA ligase">
    <location>
        <begin position="1"/>
        <end position="500"/>
    </location>
</feature>
<keyword id="KW-0030">Aminoacyl-tRNA synthetase</keyword>
<keyword id="KW-0067">ATP-binding</keyword>
<keyword id="KW-0963">Cytoplasm</keyword>
<keyword id="KW-0436">Ligase</keyword>
<keyword id="KW-0547">Nucleotide-binding</keyword>
<keyword id="KW-0648">Protein biosynthesis</keyword>
<reference key="1">
    <citation type="journal article" date="2005" name="DNA Res.">
        <title>Complete genome sequence of the facultative anaerobic magnetotactic bacterium Magnetospirillum sp. strain AMB-1.</title>
        <authorList>
            <person name="Matsunaga T."/>
            <person name="Okamura Y."/>
            <person name="Fukuda Y."/>
            <person name="Wahyudi A.T."/>
            <person name="Murase Y."/>
            <person name="Takeyama H."/>
        </authorList>
    </citation>
    <scope>NUCLEOTIDE SEQUENCE [LARGE SCALE GENOMIC DNA]</scope>
    <source>
        <strain>ATCC 700264 / AMB-1</strain>
    </source>
</reference>
<comment type="function">
    <text evidence="1">Catalyzes the attachment of proline to tRNA(Pro) in a two-step reaction: proline is first activated by ATP to form Pro-AMP and then transferred to the acceptor end of tRNA(Pro).</text>
</comment>
<comment type="catalytic activity">
    <reaction evidence="1">
        <text>tRNA(Pro) + L-proline + ATP = L-prolyl-tRNA(Pro) + AMP + diphosphate</text>
        <dbReference type="Rhea" id="RHEA:14305"/>
        <dbReference type="Rhea" id="RHEA-COMP:9700"/>
        <dbReference type="Rhea" id="RHEA-COMP:9702"/>
        <dbReference type="ChEBI" id="CHEBI:30616"/>
        <dbReference type="ChEBI" id="CHEBI:33019"/>
        <dbReference type="ChEBI" id="CHEBI:60039"/>
        <dbReference type="ChEBI" id="CHEBI:78442"/>
        <dbReference type="ChEBI" id="CHEBI:78532"/>
        <dbReference type="ChEBI" id="CHEBI:456215"/>
        <dbReference type="EC" id="6.1.1.15"/>
    </reaction>
</comment>
<comment type="subunit">
    <text evidence="1">Homodimer.</text>
</comment>
<comment type="subcellular location">
    <subcellularLocation>
        <location evidence="1">Cytoplasm</location>
    </subcellularLocation>
</comment>
<comment type="domain">
    <text evidence="1">Consists of three domains: the N-terminal catalytic domain, the anticodon-binding domain and the C-terminal extension.</text>
</comment>
<comment type="similarity">
    <text evidence="1">Belongs to the class-II aminoacyl-tRNA synthetase family. ProS type 3 subfamily.</text>
</comment>
<comment type="sequence caution" evidence="2">
    <conflict type="erroneous initiation">
        <sequence resource="EMBL-CDS" id="BAE52439"/>
    </conflict>
</comment>
<sequence length="500" mass="56165">MSKAKKTAVTPTREENFPEWYQQVIKASDMAENSPVRGCMVIKPWGYGIWEAIQRDLDRRIKETGHENCYFPLFIPLSFLEKEAAHVEGFAKEMAVVTHHRLVAEDGKLVPSGKLEEPLVVRPTSETIIGDAFARWIQSYRDLPMLVNQWANVVRWEMRPRIFLRTAEFLWQEGHTAHATAEEAMDETLKMLEVYRVMAEEVLAMPVIVGEKPAHERFPGADKTYSIEAMMQDGKALQAGTSHFLGQHFSKAQNIRYQTAQGGEEFCYTTSWGVSTRLIGGVIMSHADDNGLRVPPRIAPKQIVFVPITRADGDEALIEDFLAPIVKDLSAQSFGGERLRVHVDRRPLAPPEKRWEWVKKGAPIICEVGPRDVAGGSVAMIRRDGELKGQITPKDELVSRAAAILEDIQKTLFTQAATALKERTVTVRTLDDFLAVFADDTTFGRKFVRARWCGDSDTLAKLDEYSITIRNVPFDQDGEAGTCVLSGRPATQEVIFAKSY</sequence>
<gene>
    <name evidence="1" type="primary">proS</name>
    <name type="ordered locus">amb3636</name>
</gene>
<name>SYP_PARM1</name>
<accession>Q2W136</accession>
<proteinExistence type="inferred from homology"/>
<evidence type="ECO:0000255" key="1">
    <source>
        <dbReference type="HAMAP-Rule" id="MF_01571"/>
    </source>
</evidence>
<evidence type="ECO:0000305" key="2"/>
<organism>
    <name type="scientific">Paramagnetospirillum magneticum (strain ATCC 700264 / AMB-1)</name>
    <name type="common">Magnetospirillum magneticum</name>
    <dbReference type="NCBI Taxonomy" id="342108"/>
    <lineage>
        <taxon>Bacteria</taxon>
        <taxon>Pseudomonadati</taxon>
        <taxon>Pseudomonadota</taxon>
        <taxon>Alphaproteobacteria</taxon>
        <taxon>Rhodospirillales</taxon>
        <taxon>Magnetospirillaceae</taxon>
        <taxon>Paramagnetospirillum</taxon>
    </lineage>
</organism>
<dbReference type="EC" id="6.1.1.15" evidence="1"/>
<dbReference type="EMBL" id="AP007255">
    <property type="protein sequence ID" value="BAE52439.1"/>
    <property type="status" value="ALT_INIT"/>
    <property type="molecule type" value="Genomic_DNA"/>
</dbReference>
<dbReference type="RefSeq" id="WP_011385993.1">
    <property type="nucleotide sequence ID" value="NC_007626.1"/>
</dbReference>
<dbReference type="SMR" id="Q2W136"/>
<dbReference type="STRING" id="342108.amb3636"/>
<dbReference type="KEGG" id="mag:amb3636"/>
<dbReference type="HOGENOM" id="CLU_001882_4_2_5"/>
<dbReference type="OrthoDB" id="9809052at2"/>
<dbReference type="Proteomes" id="UP000007058">
    <property type="component" value="Chromosome"/>
</dbReference>
<dbReference type="GO" id="GO:0017101">
    <property type="term" value="C:aminoacyl-tRNA synthetase multienzyme complex"/>
    <property type="evidence" value="ECO:0007669"/>
    <property type="project" value="TreeGrafter"/>
</dbReference>
<dbReference type="GO" id="GO:0005737">
    <property type="term" value="C:cytoplasm"/>
    <property type="evidence" value="ECO:0007669"/>
    <property type="project" value="UniProtKB-SubCell"/>
</dbReference>
<dbReference type="GO" id="GO:0005524">
    <property type="term" value="F:ATP binding"/>
    <property type="evidence" value="ECO:0007669"/>
    <property type="project" value="UniProtKB-UniRule"/>
</dbReference>
<dbReference type="GO" id="GO:0004827">
    <property type="term" value="F:proline-tRNA ligase activity"/>
    <property type="evidence" value="ECO:0007669"/>
    <property type="project" value="UniProtKB-UniRule"/>
</dbReference>
<dbReference type="GO" id="GO:0006433">
    <property type="term" value="P:prolyl-tRNA aminoacylation"/>
    <property type="evidence" value="ECO:0007669"/>
    <property type="project" value="UniProtKB-UniRule"/>
</dbReference>
<dbReference type="CDD" id="cd00778">
    <property type="entry name" value="ProRS_core_arch_euk"/>
    <property type="match status" value="1"/>
</dbReference>
<dbReference type="FunFam" id="3.30.930.10:FF:000037">
    <property type="entry name" value="Proline--tRNA ligase"/>
    <property type="match status" value="1"/>
</dbReference>
<dbReference type="Gene3D" id="3.40.50.800">
    <property type="entry name" value="Anticodon-binding domain"/>
    <property type="match status" value="1"/>
</dbReference>
<dbReference type="Gene3D" id="3.30.930.10">
    <property type="entry name" value="Bira Bifunctional Protein, Domain 2"/>
    <property type="match status" value="1"/>
</dbReference>
<dbReference type="Gene3D" id="3.30.110.30">
    <property type="entry name" value="C-terminal domain of ProRS"/>
    <property type="match status" value="1"/>
</dbReference>
<dbReference type="HAMAP" id="MF_01571">
    <property type="entry name" value="Pro_tRNA_synth_type3"/>
    <property type="match status" value="1"/>
</dbReference>
<dbReference type="InterPro" id="IPR002314">
    <property type="entry name" value="aa-tRNA-synt_IIb"/>
</dbReference>
<dbReference type="InterPro" id="IPR006195">
    <property type="entry name" value="aa-tRNA-synth_II"/>
</dbReference>
<dbReference type="InterPro" id="IPR045864">
    <property type="entry name" value="aa-tRNA-synth_II/BPL/LPL"/>
</dbReference>
<dbReference type="InterPro" id="IPR004154">
    <property type="entry name" value="Anticodon-bd"/>
</dbReference>
<dbReference type="InterPro" id="IPR036621">
    <property type="entry name" value="Anticodon-bd_dom_sf"/>
</dbReference>
<dbReference type="InterPro" id="IPR004499">
    <property type="entry name" value="Pro-tRNA-ligase_IIa_arc-type"/>
</dbReference>
<dbReference type="InterPro" id="IPR016061">
    <property type="entry name" value="Pro-tRNA_ligase_II_C"/>
</dbReference>
<dbReference type="InterPro" id="IPR017449">
    <property type="entry name" value="Pro-tRNA_synth_II"/>
</dbReference>
<dbReference type="InterPro" id="IPR033721">
    <property type="entry name" value="ProRS_core_arch_euk"/>
</dbReference>
<dbReference type="NCBIfam" id="TIGR00408">
    <property type="entry name" value="proS_fam_I"/>
    <property type="match status" value="1"/>
</dbReference>
<dbReference type="PANTHER" id="PTHR43382:SF2">
    <property type="entry name" value="BIFUNCTIONAL GLUTAMATE_PROLINE--TRNA LIGASE"/>
    <property type="match status" value="1"/>
</dbReference>
<dbReference type="PANTHER" id="PTHR43382">
    <property type="entry name" value="PROLYL-TRNA SYNTHETASE"/>
    <property type="match status" value="1"/>
</dbReference>
<dbReference type="Pfam" id="PF03129">
    <property type="entry name" value="HGTP_anticodon"/>
    <property type="match status" value="1"/>
</dbReference>
<dbReference type="Pfam" id="PF09180">
    <property type="entry name" value="ProRS-C_1"/>
    <property type="match status" value="1"/>
</dbReference>
<dbReference type="Pfam" id="PF00587">
    <property type="entry name" value="tRNA-synt_2b"/>
    <property type="match status" value="1"/>
</dbReference>
<dbReference type="SMART" id="SM00946">
    <property type="entry name" value="ProRS-C_1"/>
    <property type="match status" value="1"/>
</dbReference>
<dbReference type="SUPFAM" id="SSF64586">
    <property type="entry name" value="C-terminal domain of ProRS"/>
    <property type="match status" value="1"/>
</dbReference>
<dbReference type="SUPFAM" id="SSF52954">
    <property type="entry name" value="Class II aaRS ABD-related"/>
    <property type="match status" value="1"/>
</dbReference>
<dbReference type="SUPFAM" id="SSF55681">
    <property type="entry name" value="Class II aaRS and biotin synthetases"/>
    <property type="match status" value="1"/>
</dbReference>
<dbReference type="PROSITE" id="PS50862">
    <property type="entry name" value="AA_TRNA_LIGASE_II"/>
    <property type="match status" value="1"/>
</dbReference>
<protein>
    <recommendedName>
        <fullName evidence="1">Proline--tRNA ligase</fullName>
        <ecNumber evidence="1">6.1.1.15</ecNumber>
    </recommendedName>
    <alternativeName>
        <fullName evidence="1">Prolyl-tRNA synthetase</fullName>
        <shortName evidence="1">ProRS</shortName>
    </alternativeName>
</protein>